<evidence type="ECO:0000255" key="1">
    <source>
        <dbReference type="HAMAP-Rule" id="MF_01077"/>
    </source>
</evidence>
<sequence length="154" mass="17446">MTQHDNISQIENIIEPAVRDLGYDLVDVELIMENQKWVLRVYIDHGKGIGLDDCELVSNSLDQLLDEHDPIPHSYVLEVSSPGAERPLKKKKDFVNFAGKKVQIKTYVKLDGRKNFKGKLLGLEDEHVVLETFNSGEVKIPLDKIAKANLLLEL</sequence>
<reference key="1">
    <citation type="submission" date="2008-04" db="EMBL/GenBank/DDBJ databases">
        <title>Complete sequence of chromosome of Natranaerobius thermophilus JW/NM-WN-LF.</title>
        <authorList>
            <consortium name="US DOE Joint Genome Institute"/>
            <person name="Copeland A."/>
            <person name="Lucas S."/>
            <person name="Lapidus A."/>
            <person name="Glavina del Rio T."/>
            <person name="Dalin E."/>
            <person name="Tice H."/>
            <person name="Bruce D."/>
            <person name="Goodwin L."/>
            <person name="Pitluck S."/>
            <person name="Chertkov O."/>
            <person name="Brettin T."/>
            <person name="Detter J.C."/>
            <person name="Han C."/>
            <person name="Kuske C.R."/>
            <person name="Schmutz J."/>
            <person name="Larimer F."/>
            <person name="Land M."/>
            <person name="Hauser L."/>
            <person name="Kyrpides N."/>
            <person name="Lykidis A."/>
            <person name="Mesbah N.M."/>
            <person name="Wiegel J."/>
        </authorList>
    </citation>
    <scope>NUCLEOTIDE SEQUENCE [LARGE SCALE GENOMIC DNA]</scope>
    <source>
        <strain>ATCC BAA-1301 / DSM 18059 / JW/NM-WN-LF</strain>
    </source>
</reference>
<keyword id="KW-0963">Cytoplasm</keyword>
<keyword id="KW-1185">Reference proteome</keyword>
<keyword id="KW-0690">Ribosome biogenesis</keyword>
<name>RIMP_NATTJ</name>
<organism>
    <name type="scientific">Natranaerobius thermophilus (strain ATCC BAA-1301 / DSM 18059 / JW/NM-WN-LF)</name>
    <dbReference type="NCBI Taxonomy" id="457570"/>
    <lineage>
        <taxon>Bacteria</taxon>
        <taxon>Bacillati</taxon>
        <taxon>Bacillota</taxon>
        <taxon>Clostridia</taxon>
        <taxon>Natranaerobiales</taxon>
        <taxon>Natranaerobiaceae</taxon>
        <taxon>Natranaerobius</taxon>
    </lineage>
</organism>
<comment type="function">
    <text evidence="1">Required for maturation of 30S ribosomal subunits.</text>
</comment>
<comment type="subcellular location">
    <subcellularLocation>
        <location evidence="1">Cytoplasm</location>
    </subcellularLocation>
</comment>
<comment type="similarity">
    <text evidence="1">Belongs to the RimP family.</text>
</comment>
<gene>
    <name evidence="1" type="primary">rimP</name>
    <name type="ordered locus">Nther_1440</name>
</gene>
<protein>
    <recommendedName>
        <fullName evidence="1">Ribosome maturation factor RimP</fullName>
    </recommendedName>
</protein>
<dbReference type="EMBL" id="CP001034">
    <property type="protein sequence ID" value="ACB85023.1"/>
    <property type="molecule type" value="Genomic_DNA"/>
</dbReference>
<dbReference type="RefSeq" id="WP_012447897.1">
    <property type="nucleotide sequence ID" value="NC_010718.1"/>
</dbReference>
<dbReference type="SMR" id="B2A393"/>
<dbReference type="FunCoup" id="B2A393">
    <property type="interactions" value="285"/>
</dbReference>
<dbReference type="STRING" id="457570.Nther_1440"/>
<dbReference type="KEGG" id="nth:Nther_1440"/>
<dbReference type="eggNOG" id="COG0779">
    <property type="taxonomic scope" value="Bacteria"/>
</dbReference>
<dbReference type="HOGENOM" id="CLU_070525_2_2_9"/>
<dbReference type="InParanoid" id="B2A393"/>
<dbReference type="OrthoDB" id="9805006at2"/>
<dbReference type="Proteomes" id="UP000001683">
    <property type="component" value="Chromosome"/>
</dbReference>
<dbReference type="GO" id="GO:0005829">
    <property type="term" value="C:cytosol"/>
    <property type="evidence" value="ECO:0007669"/>
    <property type="project" value="TreeGrafter"/>
</dbReference>
<dbReference type="GO" id="GO:0000028">
    <property type="term" value="P:ribosomal small subunit assembly"/>
    <property type="evidence" value="ECO:0007669"/>
    <property type="project" value="TreeGrafter"/>
</dbReference>
<dbReference type="GO" id="GO:0006412">
    <property type="term" value="P:translation"/>
    <property type="evidence" value="ECO:0007669"/>
    <property type="project" value="TreeGrafter"/>
</dbReference>
<dbReference type="CDD" id="cd01734">
    <property type="entry name" value="YlxS_C"/>
    <property type="match status" value="1"/>
</dbReference>
<dbReference type="FunFam" id="3.30.300.70:FF:000001">
    <property type="entry name" value="Ribosome maturation factor RimP"/>
    <property type="match status" value="1"/>
</dbReference>
<dbReference type="Gene3D" id="2.30.30.180">
    <property type="entry name" value="Ribosome maturation factor RimP, C-terminal domain"/>
    <property type="match status" value="1"/>
</dbReference>
<dbReference type="Gene3D" id="3.30.300.70">
    <property type="entry name" value="RimP-like superfamily, N-terminal"/>
    <property type="match status" value="1"/>
</dbReference>
<dbReference type="HAMAP" id="MF_01077">
    <property type="entry name" value="RimP"/>
    <property type="match status" value="1"/>
</dbReference>
<dbReference type="InterPro" id="IPR003728">
    <property type="entry name" value="Ribosome_maturation_RimP"/>
</dbReference>
<dbReference type="InterPro" id="IPR028998">
    <property type="entry name" value="RimP_C"/>
</dbReference>
<dbReference type="InterPro" id="IPR036847">
    <property type="entry name" value="RimP_C_sf"/>
</dbReference>
<dbReference type="InterPro" id="IPR028989">
    <property type="entry name" value="RimP_N"/>
</dbReference>
<dbReference type="InterPro" id="IPR035956">
    <property type="entry name" value="RimP_N_sf"/>
</dbReference>
<dbReference type="PANTHER" id="PTHR33867">
    <property type="entry name" value="RIBOSOME MATURATION FACTOR RIMP"/>
    <property type="match status" value="1"/>
</dbReference>
<dbReference type="PANTHER" id="PTHR33867:SF1">
    <property type="entry name" value="RIBOSOME MATURATION FACTOR RIMP"/>
    <property type="match status" value="1"/>
</dbReference>
<dbReference type="Pfam" id="PF17384">
    <property type="entry name" value="DUF150_C"/>
    <property type="match status" value="1"/>
</dbReference>
<dbReference type="Pfam" id="PF02576">
    <property type="entry name" value="RimP_N"/>
    <property type="match status" value="1"/>
</dbReference>
<dbReference type="SUPFAM" id="SSF74942">
    <property type="entry name" value="YhbC-like, C-terminal domain"/>
    <property type="match status" value="1"/>
</dbReference>
<dbReference type="SUPFAM" id="SSF75420">
    <property type="entry name" value="YhbC-like, N-terminal domain"/>
    <property type="match status" value="1"/>
</dbReference>
<proteinExistence type="inferred from homology"/>
<feature type="chain" id="PRO_1000136781" description="Ribosome maturation factor RimP">
    <location>
        <begin position="1"/>
        <end position="154"/>
    </location>
</feature>
<accession>B2A393</accession>